<gene>
    <name evidence="8" type="primary">Dcun1d3</name>
    <name evidence="6" type="synonym">SCCRO3</name>
</gene>
<protein>
    <recommendedName>
        <fullName evidence="7">DCN1-like protein 3</fullName>
        <shortName evidence="1">DCNL3</shortName>
    </recommendedName>
    <alternativeName>
        <fullName evidence="6">DCUN1 domain-containing protein 3</fullName>
    </alternativeName>
    <alternativeName>
        <fullName evidence="6">Defective in cullin neddylation protein 1-like protein 3</fullName>
    </alternativeName>
    <alternativeName>
        <fullName evidence="6">Squamous cell carcinoma-related oncogene 3</fullName>
        <shortName evidence="6">SCCRO3</shortName>
    </alternativeName>
</protein>
<name>DCNL3_MOUSE</name>
<accession>Q8K0V2</accession>
<evidence type="ECO:0000250" key="1">
    <source>
        <dbReference type="UniProtKB" id="Q8IWE4"/>
    </source>
</evidence>
<evidence type="ECO:0000255" key="2"/>
<evidence type="ECO:0000255" key="3">
    <source>
        <dbReference type="PROSITE-ProRule" id="PRU00574"/>
    </source>
</evidence>
<evidence type="ECO:0000256" key="4">
    <source>
        <dbReference type="SAM" id="MobiDB-lite"/>
    </source>
</evidence>
<evidence type="ECO:0000269" key="5">
    <source>
    </source>
</evidence>
<evidence type="ECO:0000303" key="6">
    <source>
    </source>
</evidence>
<evidence type="ECO:0000305" key="7"/>
<evidence type="ECO:0000312" key="8">
    <source>
        <dbReference type="MGI" id="MGI:2679003"/>
    </source>
</evidence>
<keyword id="KW-1003">Cell membrane</keyword>
<keyword id="KW-0963">Cytoplasm</keyword>
<keyword id="KW-0449">Lipoprotein</keyword>
<keyword id="KW-0472">Membrane</keyword>
<keyword id="KW-0519">Myristate</keyword>
<keyword id="KW-0539">Nucleus</keyword>
<keyword id="KW-1185">Reference proteome</keyword>
<dbReference type="EMBL" id="AK029043">
    <property type="protein sequence ID" value="BAC26261.1"/>
    <property type="molecule type" value="mRNA"/>
</dbReference>
<dbReference type="EMBL" id="AK155160">
    <property type="protein sequence ID" value="BAE33084.1"/>
    <property type="molecule type" value="mRNA"/>
</dbReference>
<dbReference type="EMBL" id="BC030335">
    <property type="protein sequence ID" value="AAH30335.1"/>
    <property type="molecule type" value="mRNA"/>
</dbReference>
<dbReference type="CCDS" id="CCDS21789.1"/>
<dbReference type="RefSeq" id="NP_001157175.1">
    <property type="nucleotide sequence ID" value="NM_001163703.1"/>
</dbReference>
<dbReference type="RefSeq" id="NP_775584.1">
    <property type="nucleotide sequence ID" value="NM_173408.3"/>
</dbReference>
<dbReference type="RefSeq" id="XP_006507744.1">
    <property type="nucleotide sequence ID" value="XM_006507681.4"/>
</dbReference>
<dbReference type="RefSeq" id="XP_011240050.1">
    <property type="nucleotide sequence ID" value="XM_011241748.4"/>
</dbReference>
<dbReference type="RefSeq" id="XP_011240051.1">
    <property type="nucleotide sequence ID" value="XM_011241749.2"/>
</dbReference>
<dbReference type="RefSeq" id="XP_011240052.1">
    <property type="nucleotide sequence ID" value="XM_011241750.2"/>
</dbReference>
<dbReference type="RefSeq" id="XP_011240053.1">
    <property type="nucleotide sequence ID" value="XM_011241751.2"/>
</dbReference>
<dbReference type="RefSeq" id="XP_017177689.1">
    <property type="nucleotide sequence ID" value="XM_017322200.1"/>
</dbReference>
<dbReference type="RefSeq" id="XP_036008898.1">
    <property type="nucleotide sequence ID" value="XM_036153005.1"/>
</dbReference>
<dbReference type="RefSeq" id="XP_036008899.1">
    <property type="nucleotide sequence ID" value="XM_036153006.1"/>
</dbReference>
<dbReference type="SMR" id="Q8K0V2"/>
<dbReference type="BioGRID" id="231448">
    <property type="interactions" value="3"/>
</dbReference>
<dbReference type="FunCoup" id="Q8K0V2">
    <property type="interactions" value="2367"/>
</dbReference>
<dbReference type="STRING" id="10090.ENSMUSP00000058968"/>
<dbReference type="iPTMnet" id="Q8K0V2"/>
<dbReference type="PhosphoSitePlus" id="Q8K0V2"/>
<dbReference type="SwissPalm" id="Q8K0V2"/>
<dbReference type="PaxDb" id="10090-ENSMUSP00000058968"/>
<dbReference type="ProteomicsDB" id="279313"/>
<dbReference type="Pumba" id="Q8K0V2"/>
<dbReference type="Antibodypedia" id="25634">
    <property type="antibodies" value="62 antibodies from 18 providers"/>
</dbReference>
<dbReference type="Ensembl" id="ENSMUST00000059851.14">
    <property type="protein sequence ID" value="ENSMUSP00000058968.7"/>
    <property type="gene ID" value="ENSMUSG00000048787.14"/>
</dbReference>
<dbReference type="Ensembl" id="ENSMUST00000098080.9">
    <property type="protein sequence ID" value="ENSMUSP00000095686.3"/>
    <property type="gene ID" value="ENSMUSG00000048787.14"/>
</dbReference>
<dbReference type="Ensembl" id="ENSMUST00000106519.8">
    <property type="protein sequence ID" value="ENSMUSP00000102129.2"/>
    <property type="gene ID" value="ENSMUSG00000048787.14"/>
</dbReference>
<dbReference type="Ensembl" id="ENSMUST00000207233.2">
    <property type="protein sequence ID" value="ENSMUSP00000147253.2"/>
    <property type="gene ID" value="ENSMUSG00000048787.14"/>
</dbReference>
<dbReference type="GeneID" id="233805"/>
<dbReference type="KEGG" id="mmu:233805"/>
<dbReference type="UCSC" id="uc009jly.2">
    <property type="organism name" value="mouse"/>
</dbReference>
<dbReference type="AGR" id="MGI:2679003"/>
<dbReference type="CTD" id="123879"/>
<dbReference type="MGI" id="MGI:2679003">
    <property type="gene designation" value="Dcun1d3"/>
</dbReference>
<dbReference type="VEuPathDB" id="HostDB:ENSMUSG00000048787"/>
<dbReference type="eggNOG" id="KOG3077">
    <property type="taxonomic scope" value="Eukaryota"/>
</dbReference>
<dbReference type="GeneTree" id="ENSGT00940000154944"/>
<dbReference type="HOGENOM" id="CLU_047042_2_0_1"/>
<dbReference type="InParanoid" id="Q8K0V2"/>
<dbReference type="OMA" id="DQMNQNI"/>
<dbReference type="OrthoDB" id="27198at2759"/>
<dbReference type="PhylomeDB" id="Q8K0V2"/>
<dbReference type="TreeFam" id="TF313332"/>
<dbReference type="Reactome" id="R-MMU-8951664">
    <property type="pathway name" value="Neddylation"/>
</dbReference>
<dbReference type="BioGRID-ORCS" id="233805">
    <property type="hits" value="4 hits in 78 CRISPR screens"/>
</dbReference>
<dbReference type="CD-CODE" id="CE726F99">
    <property type="entry name" value="Postsynaptic density"/>
</dbReference>
<dbReference type="ChiTaRS" id="Dcun1d3">
    <property type="organism name" value="mouse"/>
</dbReference>
<dbReference type="PRO" id="PR:Q8K0V2"/>
<dbReference type="Proteomes" id="UP000000589">
    <property type="component" value="Chromosome 7"/>
</dbReference>
<dbReference type="RNAct" id="Q8K0V2">
    <property type="molecule type" value="protein"/>
</dbReference>
<dbReference type="Bgee" id="ENSMUSG00000048787">
    <property type="expression patterns" value="Expressed in spermatid and 229 other cell types or tissues"/>
</dbReference>
<dbReference type="ExpressionAtlas" id="Q8K0V2">
    <property type="expression patterns" value="baseline and differential"/>
</dbReference>
<dbReference type="GO" id="GO:0005737">
    <property type="term" value="C:cytoplasm"/>
    <property type="evidence" value="ECO:0000250"/>
    <property type="project" value="UniProtKB"/>
</dbReference>
<dbReference type="GO" id="GO:0005829">
    <property type="term" value="C:cytosol"/>
    <property type="evidence" value="ECO:0007669"/>
    <property type="project" value="Ensembl"/>
</dbReference>
<dbReference type="GO" id="GO:0005654">
    <property type="term" value="C:nucleoplasm"/>
    <property type="evidence" value="ECO:0007669"/>
    <property type="project" value="Ensembl"/>
</dbReference>
<dbReference type="GO" id="GO:0005634">
    <property type="term" value="C:nucleus"/>
    <property type="evidence" value="ECO:0000250"/>
    <property type="project" value="UniProtKB"/>
</dbReference>
<dbReference type="GO" id="GO:0048471">
    <property type="term" value="C:perinuclear region of cytoplasm"/>
    <property type="evidence" value="ECO:0000250"/>
    <property type="project" value="UniProtKB"/>
</dbReference>
<dbReference type="GO" id="GO:0005886">
    <property type="term" value="C:plasma membrane"/>
    <property type="evidence" value="ECO:0000250"/>
    <property type="project" value="UniProtKB"/>
</dbReference>
<dbReference type="GO" id="GO:0097602">
    <property type="term" value="F:cullin family protein binding"/>
    <property type="evidence" value="ECO:0000250"/>
    <property type="project" value="UniProtKB"/>
</dbReference>
<dbReference type="GO" id="GO:0030308">
    <property type="term" value="P:negative regulation of cell growth"/>
    <property type="evidence" value="ECO:0000250"/>
    <property type="project" value="UniProtKB"/>
</dbReference>
<dbReference type="GO" id="GO:2000134">
    <property type="term" value="P:negative regulation of G1/S transition of mitotic cell cycle"/>
    <property type="evidence" value="ECO:0000250"/>
    <property type="project" value="UniProtKB"/>
</dbReference>
<dbReference type="GO" id="GO:2000435">
    <property type="term" value="P:negative regulation of protein neddylation"/>
    <property type="evidence" value="ECO:0000250"/>
    <property type="project" value="UniProtKB"/>
</dbReference>
<dbReference type="GO" id="GO:0043065">
    <property type="term" value="P:positive regulation of apoptotic process"/>
    <property type="evidence" value="ECO:0000250"/>
    <property type="project" value="UniProtKB"/>
</dbReference>
<dbReference type="GO" id="GO:2000436">
    <property type="term" value="P:positive regulation of protein neddylation"/>
    <property type="evidence" value="ECO:0000250"/>
    <property type="project" value="UniProtKB"/>
</dbReference>
<dbReference type="GO" id="GO:0010564">
    <property type="term" value="P:regulation of cell cycle process"/>
    <property type="evidence" value="ECO:0000250"/>
    <property type="project" value="UniProtKB"/>
</dbReference>
<dbReference type="GO" id="GO:2000434">
    <property type="term" value="P:regulation of protein neddylation"/>
    <property type="evidence" value="ECO:0000250"/>
    <property type="project" value="UniProtKB"/>
</dbReference>
<dbReference type="GO" id="GO:0010332">
    <property type="term" value="P:response to gamma radiation"/>
    <property type="evidence" value="ECO:0000250"/>
    <property type="project" value="UniProtKB"/>
</dbReference>
<dbReference type="GO" id="GO:0010225">
    <property type="term" value="P:response to UV-C"/>
    <property type="evidence" value="ECO:0000250"/>
    <property type="project" value="UniProtKB"/>
</dbReference>
<dbReference type="FunFam" id="1.10.238.10:FF:000126">
    <property type="entry name" value="DCN1-like protein"/>
    <property type="match status" value="1"/>
</dbReference>
<dbReference type="FunFam" id="1.10.238.200:FF:000003">
    <property type="entry name" value="DCN1-like protein 3"/>
    <property type="match status" value="1"/>
</dbReference>
<dbReference type="Gene3D" id="1.10.238.200">
    <property type="entry name" value="Cullin, PONY binding domain"/>
    <property type="match status" value="1"/>
</dbReference>
<dbReference type="Gene3D" id="1.10.238.10">
    <property type="entry name" value="EF-hand"/>
    <property type="match status" value="1"/>
</dbReference>
<dbReference type="InterPro" id="IPR014764">
    <property type="entry name" value="DCN-prot"/>
</dbReference>
<dbReference type="InterPro" id="IPR042460">
    <property type="entry name" value="DCN1-like_PONY"/>
</dbReference>
<dbReference type="InterPro" id="IPR005176">
    <property type="entry name" value="PONY_dom"/>
</dbReference>
<dbReference type="PANTHER" id="PTHR12281:SF31">
    <property type="entry name" value="DCN1-LIKE PROTEIN 3"/>
    <property type="match status" value="1"/>
</dbReference>
<dbReference type="PANTHER" id="PTHR12281">
    <property type="entry name" value="RP42 RELATED"/>
    <property type="match status" value="1"/>
</dbReference>
<dbReference type="Pfam" id="PF03556">
    <property type="entry name" value="Cullin_binding"/>
    <property type="match status" value="1"/>
</dbReference>
<dbReference type="PROSITE" id="PS51229">
    <property type="entry name" value="DCUN1"/>
    <property type="match status" value="1"/>
</dbReference>
<sequence>MGQCVTKCKNPSSTLGSKNGDRDPSNKSHSRRGASHREEQVPPCGKPAGDILVNGTKKAEAATEACQLPTSSGDAGRESKTNAEESSLQRLEELFRRYKDEREDAILEEGMERFCNDLCVDPTEFRVLLLAWKFQAATMCKFTRKEFFDGCKAISADSIDGICARFPSLLTEAKQEDKFKDLYRFTFQFGLDSEEGQRSLHREIAIALWKLVFTQNNPPVLDQWLNFLTENPSGIKGISRDTWNMFLNFTQVIGPDLSNYSEDEAWPSLFDTFVEWEMERRKREVEGRGTLSSGQEGLCPEEQT</sequence>
<comment type="function">
    <text evidence="1">Contributes to the neddylation of all cullins by transferring NEDD8 from N-terminally acetylated NEDD8-conjugating E2s enzyme to different cullin C-terminal domain-RBX complexes and may play a role in the cell cycle progression by regulating the SCF ubiquitin E3 ligase complex, after UV damage. At the cell membrane, can promote and as well inhibit cullins neddylation.</text>
</comment>
<comment type="subunit">
    <text evidence="1">Part of a complex containing DCUN1D3, CUL3 and RBX1. Interacts (via the DCUN1 domain) with the unneddylated cullins: interacts with CUL1, CUL2, CUL3, CUL4A, CUL4B and CUL5; these interactions promote the cullin neddylation and the identity of the cullin dictates the affinity of the interaction. Interacts preferentially with CUL3; this interaction triggers the relocalization of CUL3 to the cell membrane where CUL3 is neddylated. Interacts (via DCUN1 domain) with RBX1. May also interact with regulators or subunits of cullin-RING ligases such as RNF7, ELOB and DDB1; these interactions are bridged by cullins. Interacts (via DCUN1 domain) with CAND1; this interaction is bridged by cullins and strongly inhibits cullin neddylation. These CAND-cullin-DCNL complexes can only be neddylated in the presence of a substrate adapter. Interacts (via DCUN1 domain) with the N-terminally acetylated form of UBE2M and UBE2F.</text>
</comment>
<comment type="subcellular location">
    <subcellularLocation>
        <location evidence="1">Cell membrane</location>
    </subcellularLocation>
    <subcellularLocation>
        <location evidence="1">Cytoplasm</location>
    </subcellularLocation>
    <subcellularLocation>
        <location evidence="1">Nucleus</location>
    </subcellularLocation>
    <subcellularLocation>
        <location evidence="1">Cytoplasm</location>
        <location evidence="1">Perinuclear region</location>
    </subcellularLocation>
    <text evidence="1">After UVC treatment, the protein enters to the nucleus gradually. Cell membrane localization is essential for CUL3 neddylation.</text>
</comment>
<comment type="tissue specificity">
    <text evidence="5">Highest levels of expression are in the testis (PubMed:26792857). Very low levels of expression in the heart, brain, skeletal muscle, kidney, liver, spleen, lung and ovary (PubMed:26792857).</text>
</comment>
<comment type="domain">
    <text evidence="1">The DCUN1 domain, also known as PONY domain, mediates the interaction with different cullins. The DCUN1 domain mediates the interaction with the N-terminally acetylated NEDD8-conjugating E2s enzyme leading to the NEDD8 transfer from N-terminally acetylated NEDD8-conjugating E2s enzyme to different cullin C-terminal domain-RBX complexes; the neddylation efficiency correlates with the DCUN1D5-cullin and DCUN1D5-E2 interaction affinities. This domain is also involved in CAND1-, cullins- and RBX1-binding.</text>
</comment>
<feature type="initiator methionine" description="Removed" evidence="2">
    <location>
        <position position="1"/>
    </location>
</feature>
<feature type="chain" id="PRO_0000320049" description="DCN1-like protein 3">
    <location>
        <begin position="2"/>
        <end position="304"/>
    </location>
</feature>
<feature type="domain" description="DCUN1" evidence="3">
    <location>
        <begin position="86"/>
        <end position="278"/>
    </location>
</feature>
<feature type="region of interest" description="Disordered" evidence="4">
    <location>
        <begin position="1"/>
        <end position="87"/>
    </location>
</feature>
<feature type="region of interest" description="Disordered" evidence="4">
    <location>
        <begin position="284"/>
        <end position="304"/>
    </location>
</feature>
<feature type="lipid moiety-binding region" description="N-myristoyl glycine" evidence="1 2">
    <location>
        <position position="2"/>
    </location>
</feature>
<organism>
    <name type="scientific">Mus musculus</name>
    <name type="common">Mouse</name>
    <dbReference type="NCBI Taxonomy" id="10090"/>
    <lineage>
        <taxon>Eukaryota</taxon>
        <taxon>Metazoa</taxon>
        <taxon>Chordata</taxon>
        <taxon>Craniata</taxon>
        <taxon>Vertebrata</taxon>
        <taxon>Euteleostomi</taxon>
        <taxon>Mammalia</taxon>
        <taxon>Eutheria</taxon>
        <taxon>Euarchontoglires</taxon>
        <taxon>Glires</taxon>
        <taxon>Rodentia</taxon>
        <taxon>Myomorpha</taxon>
        <taxon>Muroidea</taxon>
        <taxon>Muridae</taxon>
        <taxon>Murinae</taxon>
        <taxon>Mus</taxon>
        <taxon>Mus</taxon>
    </lineage>
</organism>
<proteinExistence type="evidence at transcript level"/>
<reference key="1">
    <citation type="journal article" date="2005" name="Science">
        <title>The transcriptional landscape of the mammalian genome.</title>
        <authorList>
            <person name="Carninci P."/>
            <person name="Kasukawa T."/>
            <person name="Katayama S."/>
            <person name="Gough J."/>
            <person name="Frith M.C."/>
            <person name="Maeda N."/>
            <person name="Oyama R."/>
            <person name="Ravasi T."/>
            <person name="Lenhard B."/>
            <person name="Wells C."/>
            <person name="Kodzius R."/>
            <person name="Shimokawa K."/>
            <person name="Bajic V.B."/>
            <person name="Brenner S.E."/>
            <person name="Batalov S."/>
            <person name="Forrest A.R."/>
            <person name="Zavolan M."/>
            <person name="Davis M.J."/>
            <person name="Wilming L.G."/>
            <person name="Aidinis V."/>
            <person name="Allen J.E."/>
            <person name="Ambesi-Impiombato A."/>
            <person name="Apweiler R."/>
            <person name="Aturaliya R.N."/>
            <person name="Bailey T.L."/>
            <person name="Bansal M."/>
            <person name="Baxter L."/>
            <person name="Beisel K.W."/>
            <person name="Bersano T."/>
            <person name="Bono H."/>
            <person name="Chalk A.M."/>
            <person name="Chiu K.P."/>
            <person name="Choudhary V."/>
            <person name="Christoffels A."/>
            <person name="Clutterbuck D.R."/>
            <person name="Crowe M.L."/>
            <person name="Dalla E."/>
            <person name="Dalrymple B.P."/>
            <person name="de Bono B."/>
            <person name="Della Gatta G."/>
            <person name="di Bernardo D."/>
            <person name="Down T."/>
            <person name="Engstrom P."/>
            <person name="Fagiolini M."/>
            <person name="Faulkner G."/>
            <person name="Fletcher C.F."/>
            <person name="Fukushima T."/>
            <person name="Furuno M."/>
            <person name="Futaki S."/>
            <person name="Gariboldi M."/>
            <person name="Georgii-Hemming P."/>
            <person name="Gingeras T.R."/>
            <person name="Gojobori T."/>
            <person name="Green R.E."/>
            <person name="Gustincich S."/>
            <person name="Harbers M."/>
            <person name="Hayashi Y."/>
            <person name="Hensch T.K."/>
            <person name="Hirokawa N."/>
            <person name="Hill D."/>
            <person name="Huminiecki L."/>
            <person name="Iacono M."/>
            <person name="Ikeo K."/>
            <person name="Iwama A."/>
            <person name="Ishikawa T."/>
            <person name="Jakt M."/>
            <person name="Kanapin A."/>
            <person name="Katoh M."/>
            <person name="Kawasawa Y."/>
            <person name="Kelso J."/>
            <person name="Kitamura H."/>
            <person name="Kitano H."/>
            <person name="Kollias G."/>
            <person name="Krishnan S.P."/>
            <person name="Kruger A."/>
            <person name="Kummerfeld S.K."/>
            <person name="Kurochkin I.V."/>
            <person name="Lareau L.F."/>
            <person name="Lazarevic D."/>
            <person name="Lipovich L."/>
            <person name="Liu J."/>
            <person name="Liuni S."/>
            <person name="McWilliam S."/>
            <person name="Madan Babu M."/>
            <person name="Madera M."/>
            <person name="Marchionni L."/>
            <person name="Matsuda H."/>
            <person name="Matsuzawa S."/>
            <person name="Miki H."/>
            <person name="Mignone F."/>
            <person name="Miyake S."/>
            <person name="Morris K."/>
            <person name="Mottagui-Tabar S."/>
            <person name="Mulder N."/>
            <person name="Nakano N."/>
            <person name="Nakauchi H."/>
            <person name="Ng P."/>
            <person name="Nilsson R."/>
            <person name="Nishiguchi S."/>
            <person name="Nishikawa S."/>
            <person name="Nori F."/>
            <person name="Ohara O."/>
            <person name="Okazaki Y."/>
            <person name="Orlando V."/>
            <person name="Pang K.C."/>
            <person name="Pavan W.J."/>
            <person name="Pavesi G."/>
            <person name="Pesole G."/>
            <person name="Petrovsky N."/>
            <person name="Piazza S."/>
            <person name="Reed J."/>
            <person name="Reid J.F."/>
            <person name="Ring B.Z."/>
            <person name="Ringwald M."/>
            <person name="Rost B."/>
            <person name="Ruan Y."/>
            <person name="Salzberg S.L."/>
            <person name="Sandelin A."/>
            <person name="Schneider C."/>
            <person name="Schoenbach C."/>
            <person name="Sekiguchi K."/>
            <person name="Semple C.A."/>
            <person name="Seno S."/>
            <person name="Sessa L."/>
            <person name="Sheng Y."/>
            <person name="Shibata Y."/>
            <person name="Shimada H."/>
            <person name="Shimada K."/>
            <person name="Silva D."/>
            <person name="Sinclair B."/>
            <person name="Sperling S."/>
            <person name="Stupka E."/>
            <person name="Sugiura K."/>
            <person name="Sultana R."/>
            <person name="Takenaka Y."/>
            <person name="Taki K."/>
            <person name="Tammoja K."/>
            <person name="Tan S.L."/>
            <person name="Tang S."/>
            <person name="Taylor M.S."/>
            <person name="Tegner J."/>
            <person name="Teichmann S.A."/>
            <person name="Ueda H.R."/>
            <person name="van Nimwegen E."/>
            <person name="Verardo R."/>
            <person name="Wei C.L."/>
            <person name="Yagi K."/>
            <person name="Yamanishi H."/>
            <person name="Zabarovsky E."/>
            <person name="Zhu S."/>
            <person name="Zimmer A."/>
            <person name="Hide W."/>
            <person name="Bult C."/>
            <person name="Grimmond S.M."/>
            <person name="Teasdale R.D."/>
            <person name="Liu E.T."/>
            <person name="Brusic V."/>
            <person name="Quackenbush J."/>
            <person name="Wahlestedt C."/>
            <person name="Mattick J.S."/>
            <person name="Hume D.A."/>
            <person name="Kai C."/>
            <person name="Sasaki D."/>
            <person name="Tomaru Y."/>
            <person name="Fukuda S."/>
            <person name="Kanamori-Katayama M."/>
            <person name="Suzuki M."/>
            <person name="Aoki J."/>
            <person name="Arakawa T."/>
            <person name="Iida J."/>
            <person name="Imamura K."/>
            <person name="Itoh M."/>
            <person name="Kato T."/>
            <person name="Kawaji H."/>
            <person name="Kawagashira N."/>
            <person name="Kawashima T."/>
            <person name="Kojima M."/>
            <person name="Kondo S."/>
            <person name="Konno H."/>
            <person name="Nakano K."/>
            <person name="Ninomiya N."/>
            <person name="Nishio T."/>
            <person name="Okada M."/>
            <person name="Plessy C."/>
            <person name="Shibata K."/>
            <person name="Shiraki T."/>
            <person name="Suzuki S."/>
            <person name="Tagami M."/>
            <person name="Waki K."/>
            <person name="Watahiki A."/>
            <person name="Okamura-Oho Y."/>
            <person name="Suzuki H."/>
            <person name="Kawai J."/>
            <person name="Hayashizaki Y."/>
        </authorList>
    </citation>
    <scope>NUCLEOTIDE SEQUENCE [LARGE SCALE MRNA]</scope>
    <source>
        <strain>C57BL/6J</strain>
        <strain>NOD</strain>
        <tissue>Skin</tissue>
    </source>
</reference>
<reference key="2">
    <citation type="journal article" date="2004" name="Genome Res.">
        <title>The status, quality, and expansion of the NIH full-length cDNA project: the Mammalian Gene Collection (MGC).</title>
        <authorList>
            <consortium name="The MGC Project Team"/>
        </authorList>
    </citation>
    <scope>NUCLEOTIDE SEQUENCE [LARGE SCALE MRNA]</scope>
    <source>
        <tissue>Eye</tissue>
    </source>
</reference>
<reference key="3">
    <citation type="journal article" date="2016" name="J. Biol. Chem.">
        <title>Squamous Cell Carcinoma-related Oncogene (SCCRO) Family Members Regulate Cell Growth and Proliferation through Their Cooperative and Antagonistic Effects on Cullin Neddylation.</title>
        <authorList>
            <person name="Fu W."/>
            <person name="Sun J."/>
            <person name="Huang G."/>
            <person name="Liu J.C."/>
            <person name="Kaufman A."/>
            <person name="Ryan R.J."/>
            <person name="Ramanathan S.Y."/>
            <person name="Venkatesh T."/>
            <person name="Singh B."/>
        </authorList>
    </citation>
    <scope>TISSUE SPECIFICITY</scope>
</reference>